<comment type="function">
    <text evidence="1">May help in the organization of the PsaL subunit.</text>
</comment>
<comment type="subcellular location">
    <subcellularLocation>
        <location evidence="1">Plastid</location>
        <location evidence="1">Chloroplast thylakoid membrane</location>
        <topology evidence="1">Single-pass membrane protein</topology>
    </subcellularLocation>
</comment>
<comment type="similarity">
    <text evidence="3">Belongs to the PsaI family.</text>
</comment>
<keyword id="KW-0150">Chloroplast</keyword>
<keyword id="KW-0472">Membrane</keyword>
<keyword id="KW-0602">Photosynthesis</keyword>
<keyword id="KW-0603">Photosystem I</keyword>
<keyword id="KW-0934">Plastid</keyword>
<keyword id="KW-0793">Thylakoid</keyword>
<keyword id="KW-0812">Transmembrane</keyword>
<keyword id="KW-1133">Transmembrane helix</keyword>
<name>PSAI_PICAB</name>
<organism>
    <name type="scientific">Picea abies</name>
    <name type="common">Norway spruce</name>
    <name type="synonym">Picea excelsa</name>
    <dbReference type="NCBI Taxonomy" id="3329"/>
    <lineage>
        <taxon>Eukaryota</taxon>
        <taxon>Viridiplantae</taxon>
        <taxon>Streptophyta</taxon>
        <taxon>Embryophyta</taxon>
        <taxon>Tracheophyta</taxon>
        <taxon>Spermatophyta</taxon>
        <taxon>Pinopsida</taxon>
        <taxon>Pinidae</taxon>
        <taxon>Conifers I</taxon>
        <taxon>Pinales</taxon>
        <taxon>Pinaceae</taxon>
        <taxon>Picea</taxon>
    </lineage>
</organism>
<accession>O47040</accession>
<proteinExistence type="inferred from homology"/>
<sequence length="36" mass="4116">MIIPNLPSFFVPLVGLLLPAITMVIFHLYIQNDDIF</sequence>
<reference key="1">
    <citation type="submission" date="1997-08" db="EMBL/GenBank/DDBJ databases">
        <title>Picea abies chloroplast genome fragment of 8,7 kb including atpE, atpB, rbcL, trnR, accD, and psaI.</title>
        <authorList>
            <person name="Sutter A."/>
            <person name="Philipps A."/>
            <person name="Wild A."/>
        </authorList>
    </citation>
    <scope>NUCLEOTIDE SEQUENCE [GENOMIC DNA]</scope>
</reference>
<dbReference type="EMBL" id="AJ001004">
    <property type="protein sequence ID" value="CAA04461.1"/>
    <property type="molecule type" value="Genomic_DNA"/>
</dbReference>
<dbReference type="PIR" id="T14832">
    <property type="entry name" value="T14832"/>
</dbReference>
<dbReference type="SMR" id="O47040"/>
<dbReference type="GO" id="GO:0009535">
    <property type="term" value="C:chloroplast thylakoid membrane"/>
    <property type="evidence" value="ECO:0007669"/>
    <property type="project" value="UniProtKB-SubCell"/>
</dbReference>
<dbReference type="GO" id="GO:0009522">
    <property type="term" value="C:photosystem I"/>
    <property type="evidence" value="ECO:0007669"/>
    <property type="project" value="UniProtKB-KW"/>
</dbReference>
<dbReference type="GO" id="GO:0015979">
    <property type="term" value="P:photosynthesis"/>
    <property type="evidence" value="ECO:0007669"/>
    <property type="project" value="UniProtKB-UniRule"/>
</dbReference>
<dbReference type="HAMAP" id="MF_00431">
    <property type="entry name" value="PSI_PsaI"/>
    <property type="match status" value="1"/>
</dbReference>
<dbReference type="InterPro" id="IPR001302">
    <property type="entry name" value="PSI_PsaI"/>
</dbReference>
<dbReference type="InterPro" id="IPR036357">
    <property type="entry name" value="PSI_PsaI_sf"/>
</dbReference>
<dbReference type="NCBIfam" id="TIGR03052">
    <property type="entry name" value="PS_I_psaI"/>
    <property type="match status" value="1"/>
</dbReference>
<dbReference type="Pfam" id="PF00796">
    <property type="entry name" value="PSI_8"/>
    <property type="match status" value="1"/>
</dbReference>
<dbReference type="SUPFAM" id="SSF81540">
    <property type="entry name" value="Subunit VIII of photosystem I reaction centre, PsaI"/>
    <property type="match status" value="1"/>
</dbReference>
<geneLocation type="chloroplast"/>
<feature type="chain" id="PRO_0000194669" description="Photosystem I reaction center subunit VIII">
    <location>
        <begin position="1"/>
        <end position="36"/>
    </location>
</feature>
<feature type="transmembrane region" description="Helical" evidence="2">
    <location>
        <begin position="10"/>
        <end position="30"/>
    </location>
</feature>
<gene>
    <name type="primary">psaI</name>
</gene>
<protein>
    <recommendedName>
        <fullName>Photosystem I reaction center subunit VIII</fullName>
        <shortName>PSI-I</shortName>
    </recommendedName>
</protein>
<evidence type="ECO:0000250" key="1"/>
<evidence type="ECO:0000255" key="2"/>
<evidence type="ECO:0000305" key="3"/>